<feature type="chain" id="PRO_0000302409" description="Glycine cleavage system H protein">
    <location>
        <begin position="1"/>
        <end position="129"/>
    </location>
</feature>
<feature type="domain" description="Lipoyl-binding" evidence="2">
    <location>
        <begin position="24"/>
        <end position="106"/>
    </location>
</feature>
<feature type="modified residue" description="N6-lipoyllysine" evidence="1">
    <location>
        <position position="65"/>
    </location>
</feature>
<organism>
    <name type="scientific">Prochlorococcus marinus (strain SARG / CCMP1375 / SS120)</name>
    <dbReference type="NCBI Taxonomy" id="167539"/>
    <lineage>
        <taxon>Bacteria</taxon>
        <taxon>Bacillati</taxon>
        <taxon>Cyanobacteriota</taxon>
        <taxon>Cyanophyceae</taxon>
        <taxon>Synechococcales</taxon>
        <taxon>Prochlorococcaceae</taxon>
        <taxon>Prochlorococcus</taxon>
    </lineage>
</organism>
<sequence length="129" mass="14044">MIFDFPKKFRFADSHEYACPEGDLVRIGISAFAVDQLGDIVFVDLPGIGTLLEQGISFGSVESVKAVEDMNAPIGGEVLQINESVLNSPEELQNDPHGEGWLLLVKPSDASQLDKLMSSEIYSEKVSSK</sequence>
<proteinExistence type="inferred from homology"/>
<gene>
    <name evidence="1" type="primary">gcvH</name>
    <name type="ordered locus">Pro_1830</name>
</gene>
<evidence type="ECO:0000255" key="1">
    <source>
        <dbReference type="HAMAP-Rule" id="MF_00272"/>
    </source>
</evidence>
<evidence type="ECO:0000255" key="2">
    <source>
        <dbReference type="PROSITE-ProRule" id="PRU01066"/>
    </source>
</evidence>
<protein>
    <recommendedName>
        <fullName evidence="1">Glycine cleavage system H protein</fullName>
    </recommendedName>
</protein>
<accession>Q7V9K3</accession>
<name>GCSH_PROMA</name>
<keyword id="KW-0450">Lipoyl</keyword>
<keyword id="KW-1185">Reference proteome</keyword>
<reference key="1">
    <citation type="journal article" date="2003" name="Proc. Natl. Acad. Sci. U.S.A.">
        <title>Genome sequence of the cyanobacterium Prochlorococcus marinus SS120, a nearly minimal oxyphototrophic genome.</title>
        <authorList>
            <person name="Dufresne A."/>
            <person name="Salanoubat M."/>
            <person name="Partensky F."/>
            <person name="Artiguenave F."/>
            <person name="Axmann I.M."/>
            <person name="Barbe V."/>
            <person name="Duprat S."/>
            <person name="Galperin M.Y."/>
            <person name="Koonin E.V."/>
            <person name="Le Gall F."/>
            <person name="Makarova K.S."/>
            <person name="Ostrowski M."/>
            <person name="Oztas S."/>
            <person name="Robert C."/>
            <person name="Rogozin I.B."/>
            <person name="Scanlan D.J."/>
            <person name="Tandeau de Marsac N."/>
            <person name="Weissenbach J."/>
            <person name="Wincker P."/>
            <person name="Wolf Y.I."/>
            <person name="Hess W.R."/>
        </authorList>
    </citation>
    <scope>NUCLEOTIDE SEQUENCE [LARGE SCALE GENOMIC DNA]</scope>
    <source>
        <strain>SARG / CCMP1375 / SS120</strain>
    </source>
</reference>
<comment type="function">
    <text evidence="1">The glycine cleavage system catalyzes the degradation of glycine. The H protein shuttles the methylamine group of glycine from the P protein to the T protein.</text>
</comment>
<comment type="cofactor">
    <cofactor evidence="1">
        <name>(R)-lipoate</name>
        <dbReference type="ChEBI" id="CHEBI:83088"/>
    </cofactor>
    <text evidence="1">Binds 1 lipoyl cofactor covalently.</text>
</comment>
<comment type="subunit">
    <text evidence="1">The glycine cleavage system is composed of four proteins: P, T, L and H.</text>
</comment>
<comment type="similarity">
    <text evidence="1">Belongs to the GcvH family.</text>
</comment>
<dbReference type="EMBL" id="AE017126">
    <property type="protein sequence ID" value="AAQ00874.1"/>
    <property type="molecule type" value="Genomic_DNA"/>
</dbReference>
<dbReference type="RefSeq" id="NP_876221.1">
    <property type="nucleotide sequence ID" value="NC_005042.1"/>
</dbReference>
<dbReference type="RefSeq" id="WP_011125979.1">
    <property type="nucleotide sequence ID" value="NC_005042.1"/>
</dbReference>
<dbReference type="SMR" id="Q7V9K3"/>
<dbReference type="STRING" id="167539.Pro_1830"/>
<dbReference type="EnsemblBacteria" id="AAQ00874">
    <property type="protein sequence ID" value="AAQ00874"/>
    <property type="gene ID" value="Pro_1830"/>
</dbReference>
<dbReference type="KEGG" id="pma:Pro_1830"/>
<dbReference type="PATRIC" id="fig|167539.5.peg.1932"/>
<dbReference type="eggNOG" id="COG0509">
    <property type="taxonomic scope" value="Bacteria"/>
</dbReference>
<dbReference type="HOGENOM" id="CLU_097408_2_2_3"/>
<dbReference type="OrthoDB" id="9796712at2"/>
<dbReference type="Proteomes" id="UP000001420">
    <property type="component" value="Chromosome"/>
</dbReference>
<dbReference type="GO" id="GO:0005829">
    <property type="term" value="C:cytosol"/>
    <property type="evidence" value="ECO:0007669"/>
    <property type="project" value="TreeGrafter"/>
</dbReference>
<dbReference type="GO" id="GO:0005960">
    <property type="term" value="C:glycine cleavage complex"/>
    <property type="evidence" value="ECO:0007669"/>
    <property type="project" value="InterPro"/>
</dbReference>
<dbReference type="GO" id="GO:0019464">
    <property type="term" value="P:glycine decarboxylation via glycine cleavage system"/>
    <property type="evidence" value="ECO:0007669"/>
    <property type="project" value="UniProtKB-UniRule"/>
</dbReference>
<dbReference type="CDD" id="cd06848">
    <property type="entry name" value="GCS_H"/>
    <property type="match status" value="1"/>
</dbReference>
<dbReference type="Gene3D" id="2.40.50.100">
    <property type="match status" value="1"/>
</dbReference>
<dbReference type="HAMAP" id="MF_00272">
    <property type="entry name" value="GcvH"/>
    <property type="match status" value="1"/>
</dbReference>
<dbReference type="InterPro" id="IPR003016">
    <property type="entry name" value="2-oxoA_DH_lipoyl-BS"/>
</dbReference>
<dbReference type="InterPro" id="IPR000089">
    <property type="entry name" value="Biotin_lipoyl"/>
</dbReference>
<dbReference type="InterPro" id="IPR002930">
    <property type="entry name" value="GCV_H"/>
</dbReference>
<dbReference type="InterPro" id="IPR033753">
    <property type="entry name" value="GCV_H/Fam206"/>
</dbReference>
<dbReference type="InterPro" id="IPR017453">
    <property type="entry name" value="GCV_H_sub"/>
</dbReference>
<dbReference type="InterPro" id="IPR011053">
    <property type="entry name" value="Single_hybrid_motif"/>
</dbReference>
<dbReference type="NCBIfam" id="TIGR00527">
    <property type="entry name" value="gcvH"/>
    <property type="match status" value="1"/>
</dbReference>
<dbReference type="NCBIfam" id="NF002270">
    <property type="entry name" value="PRK01202.1"/>
    <property type="match status" value="1"/>
</dbReference>
<dbReference type="PANTHER" id="PTHR11715">
    <property type="entry name" value="GLYCINE CLEAVAGE SYSTEM H PROTEIN"/>
    <property type="match status" value="1"/>
</dbReference>
<dbReference type="PANTHER" id="PTHR11715:SF3">
    <property type="entry name" value="GLYCINE CLEAVAGE SYSTEM H PROTEIN-RELATED"/>
    <property type="match status" value="1"/>
</dbReference>
<dbReference type="Pfam" id="PF01597">
    <property type="entry name" value="GCV_H"/>
    <property type="match status" value="1"/>
</dbReference>
<dbReference type="SUPFAM" id="SSF51230">
    <property type="entry name" value="Single hybrid motif"/>
    <property type="match status" value="1"/>
</dbReference>
<dbReference type="PROSITE" id="PS50968">
    <property type="entry name" value="BIOTINYL_LIPOYL"/>
    <property type="match status" value="1"/>
</dbReference>
<dbReference type="PROSITE" id="PS00189">
    <property type="entry name" value="LIPOYL"/>
    <property type="match status" value="1"/>
</dbReference>